<sequence length="453" mass="50307">MSPQTETKAGVGFKAGVKEYKLTYYTPEYETKDTDILAAFRVTPQPGVPPEERGAAVAAESSTGTWTTVWTDGLTSLDRYKGRCYHIEPVPGEEEQFIAYVAYPLDLFEEGSVTNMFTSIVGNVFGFKALRALRLEDLRIPVAYVKTFQGPPHGIQVERDKLNKYGRPLLGCTIKPKLGLSAKNYGRAVYECLRGGLDFTKDDENVNSQPFMRWRDRFLFCAEAIYKSQAETGEIKGHYLNATAGTCEEMIKRAVFARELGVPIVMHDYLTGGFTANTTLSHYCRDNGLLLHIHRAMHAVIDRQKNHGMHFRVLAKALRMSGGDHIHSGTVVGKLEGERDITLGFVDLLRDDYIEKDRSRGIYFTQDWVSLPGVLPVASRGIHVWHMPALTEIFGDDSVLQFGGGTLGHPWGNAPGAVANRVALEACVKARNEGRDLASEGGEIIREACKWSP</sequence>
<keyword id="KW-0007">Acetylation</keyword>
<keyword id="KW-0113">Calvin cycle</keyword>
<keyword id="KW-0120">Carbon dioxide fixation</keyword>
<keyword id="KW-0150">Chloroplast</keyword>
<keyword id="KW-1015">Disulfide bond</keyword>
<keyword id="KW-0456">Lyase</keyword>
<keyword id="KW-0460">Magnesium</keyword>
<keyword id="KW-0479">Metal-binding</keyword>
<keyword id="KW-0488">Methylation</keyword>
<keyword id="KW-0503">Monooxygenase</keyword>
<keyword id="KW-0560">Oxidoreductase</keyword>
<keyword id="KW-0601">Photorespiration</keyword>
<keyword id="KW-0602">Photosynthesis</keyword>
<keyword id="KW-0934">Plastid</keyword>
<organism>
    <name type="scientific">Galium parisiense</name>
    <name type="common">Wall bedstraw</name>
    <dbReference type="NCBI Taxonomy" id="29796"/>
    <lineage>
        <taxon>Eukaryota</taxon>
        <taxon>Viridiplantae</taxon>
        <taxon>Streptophyta</taxon>
        <taxon>Embryophyta</taxon>
        <taxon>Tracheophyta</taxon>
        <taxon>Spermatophyta</taxon>
        <taxon>Magnoliopsida</taxon>
        <taxon>eudicotyledons</taxon>
        <taxon>Gunneridae</taxon>
        <taxon>Pentapetalae</taxon>
        <taxon>asterids</taxon>
        <taxon>lamiids</taxon>
        <taxon>Gentianales</taxon>
        <taxon>Rubiaceae</taxon>
        <taxon>Rubioideae</taxon>
        <taxon>Rubieae</taxon>
        <taxon>Galium</taxon>
    </lineage>
</organism>
<evidence type="ECO:0000255" key="1">
    <source>
        <dbReference type="HAMAP-Rule" id="MF_01338"/>
    </source>
</evidence>
<feature type="propeptide" id="PRO_0000031237" evidence="1">
    <location>
        <begin position="1"/>
        <end position="2"/>
    </location>
</feature>
<feature type="chain" id="PRO_0000031238" description="Ribulose bisphosphate carboxylase large chain">
    <location>
        <begin position="3"/>
        <end position="453" status="greater than"/>
    </location>
</feature>
<feature type="active site" description="Proton acceptor" evidence="1">
    <location>
        <position position="175"/>
    </location>
</feature>
<feature type="active site" description="Proton acceptor" evidence="1">
    <location>
        <position position="294"/>
    </location>
</feature>
<feature type="binding site" description="in homodimeric partner" evidence="1">
    <location>
        <position position="123"/>
    </location>
    <ligand>
        <name>substrate</name>
    </ligand>
</feature>
<feature type="binding site" evidence="1">
    <location>
        <position position="173"/>
    </location>
    <ligand>
        <name>substrate</name>
    </ligand>
</feature>
<feature type="binding site" evidence="1">
    <location>
        <position position="177"/>
    </location>
    <ligand>
        <name>substrate</name>
    </ligand>
</feature>
<feature type="binding site" description="via carbamate group" evidence="1">
    <location>
        <position position="201"/>
    </location>
    <ligand>
        <name>Mg(2+)</name>
        <dbReference type="ChEBI" id="CHEBI:18420"/>
    </ligand>
</feature>
<feature type="binding site" evidence="1">
    <location>
        <position position="203"/>
    </location>
    <ligand>
        <name>Mg(2+)</name>
        <dbReference type="ChEBI" id="CHEBI:18420"/>
    </ligand>
</feature>
<feature type="binding site" evidence="1">
    <location>
        <position position="204"/>
    </location>
    <ligand>
        <name>Mg(2+)</name>
        <dbReference type="ChEBI" id="CHEBI:18420"/>
    </ligand>
</feature>
<feature type="binding site" evidence="1">
    <location>
        <position position="295"/>
    </location>
    <ligand>
        <name>substrate</name>
    </ligand>
</feature>
<feature type="binding site" evidence="1">
    <location>
        <position position="327"/>
    </location>
    <ligand>
        <name>substrate</name>
    </ligand>
</feature>
<feature type="binding site" evidence="1">
    <location>
        <position position="379"/>
    </location>
    <ligand>
        <name>substrate</name>
    </ligand>
</feature>
<feature type="site" description="Transition state stabilizer" evidence="1">
    <location>
        <position position="334"/>
    </location>
</feature>
<feature type="modified residue" description="N-acetylproline" evidence="1">
    <location>
        <position position="3"/>
    </location>
</feature>
<feature type="modified residue" description="N6,N6,N6-trimethyllysine" evidence="1">
    <location>
        <position position="14"/>
    </location>
</feature>
<feature type="modified residue" description="N6-carboxylysine" evidence="1">
    <location>
        <position position="201"/>
    </location>
</feature>
<feature type="disulfide bond" description="Interchain; in linked form" evidence="1">
    <location>
        <position position="247"/>
    </location>
</feature>
<feature type="non-terminal residue">
    <location>
        <position position="453"/>
    </location>
</feature>
<name>RBL_GALPR</name>
<accession>Q32344</accession>
<geneLocation type="chloroplast"/>
<reference key="1">
    <citation type="journal article" date="1995" name="J. Mol. Evol.">
        <title>Comparison of the evolution of ribulose-1, 5-biphosphate carboxylase (rbcL) and atpB-rbcL noncoding spacer sequences in a recent plant group, the tribe Rubieae (Rubiaceae).</title>
        <authorList>
            <person name="Manen J.F."/>
            <person name="Natali A."/>
        </authorList>
    </citation>
    <scope>NUCLEOTIDE SEQUENCE [GENOMIC DNA]</scope>
</reference>
<proteinExistence type="inferred from homology"/>
<comment type="function">
    <text evidence="1">RuBisCO catalyzes two reactions: the carboxylation of D-ribulose 1,5-bisphosphate, the primary event in carbon dioxide fixation, as well as the oxidative fragmentation of the pentose substrate in the photorespiration process. Both reactions occur simultaneously and in competition at the same active site.</text>
</comment>
<comment type="catalytic activity">
    <reaction evidence="1">
        <text>2 (2R)-3-phosphoglycerate + 2 H(+) = D-ribulose 1,5-bisphosphate + CO2 + H2O</text>
        <dbReference type="Rhea" id="RHEA:23124"/>
        <dbReference type="ChEBI" id="CHEBI:15377"/>
        <dbReference type="ChEBI" id="CHEBI:15378"/>
        <dbReference type="ChEBI" id="CHEBI:16526"/>
        <dbReference type="ChEBI" id="CHEBI:57870"/>
        <dbReference type="ChEBI" id="CHEBI:58272"/>
        <dbReference type="EC" id="4.1.1.39"/>
    </reaction>
</comment>
<comment type="catalytic activity">
    <reaction evidence="1">
        <text>D-ribulose 1,5-bisphosphate + O2 = 2-phosphoglycolate + (2R)-3-phosphoglycerate + 2 H(+)</text>
        <dbReference type="Rhea" id="RHEA:36631"/>
        <dbReference type="ChEBI" id="CHEBI:15378"/>
        <dbReference type="ChEBI" id="CHEBI:15379"/>
        <dbReference type="ChEBI" id="CHEBI:57870"/>
        <dbReference type="ChEBI" id="CHEBI:58033"/>
        <dbReference type="ChEBI" id="CHEBI:58272"/>
    </reaction>
</comment>
<comment type="cofactor">
    <cofactor evidence="1">
        <name>Mg(2+)</name>
        <dbReference type="ChEBI" id="CHEBI:18420"/>
    </cofactor>
    <text evidence="1">Binds 1 Mg(2+) ion per subunit.</text>
</comment>
<comment type="subunit">
    <text evidence="1">Heterohexadecamer of 8 large chains and 8 small chains; disulfide-linked. The disulfide link is formed within the large subunit homodimers.</text>
</comment>
<comment type="subcellular location">
    <subcellularLocation>
        <location>Plastid</location>
        <location>Chloroplast</location>
    </subcellularLocation>
</comment>
<comment type="PTM">
    <text evidence="1">The disulfide bond which can form in the large chain dimeric partners within the hexadecamer appears to be associated with oxidative stress and protein turnover.</text>
</comment>
<comment type="miscellaneous">
    <text evidence="1">The basic functional RuBisCO is composed of a large chain homodimer in a 'head-to-tail' conformation. In form I RuBisCO this homodimer is arranged in a barrel-like tetramer with the small subunits forming a tetrameric 'cap' on each end of the 'barrel'.</text>
</comment>
<comment type="similarity">
    <text evidence="1">Belongs to the RuBisCO large chain family. Type I subfamily.</text>
</comment>
<dbReference type="EC" id="4.1.1.39" evidence="1"/>
<dbReference type="EMBL" id="X81102">
    <property type="protein sequence ID" value="CAA57008.1"/>
    <property type="molecule type" value="Genomic_DNA"/>
</dbReference>
<dbReference type="PIR" id="S47231">
    <property type="entry name" value="S47231"/>
</dbReference>
<dbReference type="SMR" id="Q32344"/>
<dbReference type="GO" id="GO:0009507">
    <property type="term" value="C:chloroplast"/>
    <property type="evidence" value="ECO:0007669"/>
    <property type="project" value="UniProtKB-SubCell"/>
</dbReference>
<dbReference type="GO" id="GO:0000287">
    <property type="term" value="F:magnesium ion binding"/>
    <property type="evidence" value="ECO:0007669"/>
    <property type="project" value="InterPro"/>
</dbReference>
<dbReference type="GO" id="GO:0004497">
    <property type="term" value="F:monooxygenase activity"/>
    <property type="evidence" value="ECO:0007669"/>
    <property type="project" value="UniProtKB-KW"/>
</dbReference>
<dbReference type="GO" id="GO:0016984">
    <property type="term" value="F:ribulose-bisphosphate carboxylase activity"/>
    <property type="evidence" value="ECO:0007669"/>
    <property type="project" value="UniProtKB-EC"/>
</dbReference>
<dbReference type="GO" id="GO:0009853">
    <property type="term" value="P:photorespiration"/>
    <property type="evidence" value="ECO:0007669"/>
    <property type="project" value="UniProtKB-KW"/>
</dbReference>
<dbReference type="GO" id="GO:0019253">
    <property type="term" value="P:reductive pentose-phosphate cycle"/>
    <property type="evidence" value="ECO:0007669"/>
    <property type="project" value="UniProtKB-KW"/>
</dbReference>
<dbReference type="CDD" id="cd08212">
    <property type="entry name" value="RuBisCO_large_I"/>
    <property type="match status" value="1"/>
</dbReference>
<dbReference type="FunFam" id="3.20.20.110:FF:000003">
    <property type="entry name" value="Ribulose bisphosphate carboxylase large chain"/>
    <property type="match status" value="1"/>
</dbReference>
<dbReference type="FunFam" id="3.30.70.150:FF:000001">
    <property type="entry name" value="Ribulose bisphosphate carboxylase large chain"/>
    <property type="match status" value="1"/>
</dbReference>
<dbReference type="Gene3D" id="3.20.20.110">
    <property type="entry name" value="Ribulose bisphosphate carboxylase, large subunit, C-terminal domain"/>
    <property type="match status" value="1"/>
</dbReference>
<dbReference type="Gene3D" id="3.30.70.150">
    <property type="entry name" value="RuBisCO large subunit, N-terminal domain"/>
    <property type="match status" value="1"/>
</dbReference>
<dbReference type="HAMAP" id="MF_01338">
    <property type="entry name" value="RuBisCO_L_type1"/>
    <property type="match status" value="1"/>
</dbReference>
<dbReference type="InterPro" id="IPR033966">
    <property type="entry name" value="RuBisCO"/>
</dbReference>
<dbReference type="InterPro" id="IPR020878">
    <property type="entry name" value="RuBisCo_large_chain_AS"/>
</dbReference>
<dbReference type="InterPro" id="IPR000685">
    <property type="entry name" value="RuBisCO_lsu_C"/>
</dbReference>
<dbReference type="InterPro" id="IPR036376">
    <property type="entry name" value="RuBisCO_lsu_C_sf"/>
</dbReference>
<dbReference type="InterPro" id="IPR017443">
    <property type="entry name" value="RuBisCO_lsu_fd_N"/>
</dbReference>
<dbReference type="InterPro" id="IPR036422">
    <property type="entry name" value="RuBisCO_lsu_N_sf"/>
</dbReference>
<dbReference type="InterPro" id="IPR020888">
    <property type="entry name" value="RuBisCO_lsuI"/>
</dbReference>
<dbReference type="NCBIfam" id="NF003252">
    <property type="entry name" value="PRK04208.1"/>
    <property type="match status" value="1"/>
</dbReference>
<dbReference type="PANTHER" id="PTHR42704">
    <property type="entry name" value="RIBULOSE BISPHOSPHATE CARBOXYLASE"/>
    <property type="match status" value="1"/>
</dbReference>
<dbReference type="PANTHER" id="PTHR42704:SF15">
    <property type="entry name" value="RIBULOSE BISPHOSPHATE CARBOXYLASE LARGE CHAIN"/>
    <property type="match status" value="1"/>
</dbReference>
<dbReference type="Pfam" id="PF00016">
    <property type="entry name" value="RuBisCO_large"/>
    <property type="match status" value="1"/>
</dbReference>
<dbReference type="Pfam" id="PF02788">
    <property type="entry name" value="RuBisCO_large_N"/>
    <property type="match status" value="1"/>
</dbReference>
<dbReference type="SFLD" id="SFLDG01052">
    <property type="entry name" value="RuBisCO"/>
    <property type="match status" value="1"/>
</dbReference>
<dbReference type="SFLD" id="SFLDS00014">
    <property type="entry name" value="RuBisCO"/>
    <property type="match status" value="1"/>
</dbReference>
<dbReference type="SFLD" id="SFLDG00301">
    <property type="entry name" value="RuBisCO-like_proteins"/>
    <property type="match status" value="1"/>
</dbReference>
<dbReference type="SUPFAM" id="SSF51649">
    <property type="entry name" value="RuBisCo, C-terminal domain"/>
    <property type="match status" value="1"/>
</dbReference>
<dbReference type="SUPFAM" id="SSF54966">
    <property type="entry name" value="RuBisCO, large subunit, small (N-terminal) domain"/>
    <property type="match status" value="1"/>
</dbReference>
<dbReference type="PROSITE" id="PS00157">
    <property type="entry name" value="RUBISCO_LARGE"/>
    <property type="match status" value="1"/>
</dbReference>
<protein>
    <recommendedName>
        <fullName evidence="1">Ribulose bisphosphate carboxylase large chain</fullName>
        <shortName evidence="1">RuBisCO large subunit</shortName>
        <ecNumber evidence="1">4.1.1.39</ecNumber>
    </recommendedName>
</protein>
<gene>
    <name evidence="1" type="primary">rbcL</name>
</gene>